<gene>
    <name evidence="1" type="primary">bioB</name>
    <name type="ordered locus">PM0379</name>
</gene>
<evidence type="ECO:0000255" key="1">
    <source>
        <dbReference type="HAMAP-Rule" id="MF_01694"/>
    </source>
</evidence>
<evidence type="ECO:0000255" key="2">
    <source>
        <dbReference type="PROSITE-ProRule" id="PRU01266"/>
    </source>
</evidence>
<proteinExistence type="inferred from homology"/>
<dbReference type="EC" id="2.8.1.6" evidence="1"/>
<dbReference type="EMBL" id="AE004439">
    <property type="protein sequence ID" value="AAK02463.1"/>
    <property type="molecule type" value="Genomic_DNA"/>
</dbReference>
<dbReference type="RefSeq" id="WP_005726062.1">
    <property type="nucleotide sequence ID" value="NC_002663.1"/>
</dbReference>
<dbReference type="SMR" id="Q9CNP8"/>
<dbReference type="STRING" id="272843.PM0379"/>
<dbReference type="EnsemblBacteria" id="AAK02463">
    <property type="protein sequence ID" value="AAK02463"/>
    <property type="gene ID" value="PM0379"/>
</dbReference>
<dbReference type="KEGG" id="pmu:PM0379"/>
<dbReference type="PATRIC" id="fig|272843.6.peg.392"/>
<dbReference type="HOGENOM" id="CLU_033172_1_2_6"/>
<dbReference type="OrthoDB" id="9786826at2"/>
<dbReference type="UniPathway" id="UPA00078">
    <property type="reaction ID" value="UER00162"/>
</dbReference>
<dbReference type="Proteomes" id="UP000000809">
    <property type="component" value="Chromosome"/>
</dbReference>
<dbReference type="GO" id="GO:0051537">
    <property type="term" value="F:2 iron, 2 sulfur cluster binding"/>
    <property type="evidence" value="ECO:0007669"/>
    <property type="project" value="UniProtKB-KW"/>
</dbReference>
<dbReference type="GO" id="GO:0051539">
    <property type="term" value="F:4 iron, 4 sulfur cluster binding"/>
    <property type="evidence" value="ECO:0007669"/>
    <property type="project" value="UniProtKB-KW"/>
</dbReference>
<dbReference type="GO" id="GO:0004076">
    <property type="term" value="F:biotin synthase activity"/>
    <property type="evidence" value="ECO:0007669"/>
    <property type="project" value="UniProtKB-UniRule"/>
</dbReference>
<dbReference type="GO" id="GO:0005506">
    <property type="term" value="F:iron ion binding"/>
    <property type="evidence" value="ECO:0007669"/>
    <property type="project" value="UniProtKB-UniRule"/>
</dbReference>
<dbReference type="GO" id="GO:0009102">
    <property type="term" value="P:biotin biosynthetic process"/>
    <property type="evidence" value="ECO:0007669"/>
    <property type="project" value="UniProtKB-UniRule"/>
</dbReference>
<dbReference type="CDD" id="cd01335">
    <property type="entry name" value="Radical_SAM"/>
    <property type="match status" value="1"/>
</dbReference>
<dbReference type="FunFam" id="3.20.20.70:FF:000011">
    <property type="entry name" value="Biotin synthase"/>
    <property type="match status" value="1"/>
</dbReference>
<dbReference type="Gene3D" id="3.20.20.70">
    <property type="entry name" value="Aldolase class I"/>
    <property type="match status" value="1"/>
</dbReference>
<dbReference type="HAMAP" id="MF_01694">
    <property type="entry name" value="BioB"/>
    <property type="match status" value="1"/>
</dbReference>
<dbReference type="InterPro" id="IPR013785">
    <property type="entry name" value="Aldolase_TIM"/>
</dbReference>
<dbReference type="InterPro" id="IPR010722">
    <property type="entry name" value="BATS_dom"/>
</dbReference>
<dbReference type="InterPro" id="IPR002684">
    <property type="entry name" value="Biotin_synth/BioAB"/>
</dbReference>
<dbReference type="InterPro" id="IPR024177">
    <property type="entry name" value="Biotin_synthase"/>
</dbReference>
<dbReference type="InterPro" id="IPR006638">
    <property type="entry name" value="Elp3/MiaA/NifB-like_rSAM"/>
</dbReference>
<dbReference type="InterPro" id="IPR007197">
    <property type="entry name" value="rSAM"/>
</dbReference>
<dbReference type="NCBIfam" id="TIGR00433">
    <property type="entry name" value="bioB"/>
    <property type="match status" value="1"/>
</dbReference>
<dbReference type="PANTHER" id="PTHR22976">
    <property type="entry name" value="BIOTIN SYNTHASE"/>
    <property type="match status" value="1"/>
</dbReference>
<dbReference type="PANTHER" id="PTHR22976:SF2">
    <property type="entry name" value="BIOTIN SYNTHASE, MITOCHONDRIAL"/>
    <property type="match status" value="1"/>
</dbReference>
<dbReference type="Pfam" id="PF06968">
    <property type="entry name" value="BATS"/>
    <property type="match status" value="1"/>
</dbReference>
<dbReference type="Pfam" id="PF04055">
    <property type="entry name" value="Radical_SAM"/>
    <property type="match status" value="1"/>
</dbReference>
<dbReference type="PIRSF" id="PIRSF001619">
    <property type="entry name" value="Biotin_synth"/>
    <property type="match status" value="1"/>
</dbReference>
<dbReference type="SFLD" id="SFLDF00272">
    <property type="entry name" value="biotin_synthase"/>
    <property type="match status" value="1"/>
</dbReference>
<dbReference type="SFLD" id="SFLDS00029">
    <property type="entry name" value="Radical_SAM"/>
    <property type="match status" value="1"/>
</dbReference>
<dbReference type="SMART" id="SM00876">
    <property type="entry name" value="BATS"/>
    <property type="match status" value="1"/>
</dbReference>
<dbReference type="SMART" id="SM00729">
    <property type="entry name" value="Elp3"/>
    <property type="match status" value="1"/>
</dbReference>
<dbReference type="SUPFAM" id="SSF102114">
    <property type="entry name" value="Radical SAM enzymes"/>
    <property type="match status" value="1"/>
</dbReference>
<dbReference type="PROSITE" id="PS51918">
    <property type="entry name" value="RADICAL_SAM"/>
    <property type="match status" value="1"/>
</dbReference>
<accession>Q9CNP8</accession>
<feature type="chain" id="PRO_0000381518" description="Biotin synthase">
    <location>
        <begin position="1"/>
        <end position="336"/>
    </location>
</feature>
<feature type="domain" description="Radical SAM core" evidence="2">
    <location>
        <begin position="52"/>
        <end position="279"/>
    </location>
</feature>
<feature type="binding site" evidence="1">
    <location>
        <position position="67"/>
    </location>
    <ligand>
        <name>[4Fe-4S] cluster</name>
        <dbReference type="ChEBI" id="CHEBI:49883"/>
        <note>4Fe-4S-S-AdoMet</note>
    </ligand>
</feature>
<feature type="binding site" evidence="1">
    <location>
        <position position="71"/>
    </location>
    <ligand>
        <name>[4Fe-4S] cluster</name>
        <dbReference type="ChEBI" id="CHEBI:49883"/>
        <note>4Fe-4S-S-AdoMet</note>
    </ligand>
</feature>
<feature type="binding site" evidence="1">
    <location>
        <position position="74"/>
    </location>
    <ligand>
        <name>[4Fe-4S] cluster</name>
        <dbReference type="ChEBI" id="CHEBI:49883"/>
        <note>4Fe-4S-S-AdoMet</note>
    </ligand>
</feature>
<feature type="binding site" evidence="1">
    <location>
        <position position="111"/>
    </location>
    <ligand>
        <name>[2Fe-2S] cluster</name>
        <dbReference type="ChEBI" id="CHEBI:190135"/>
    </ligand>
</feature>
<feature type="binding site" evidence="1">
    <location>
        <position position="142"/>
    </location>
    <ligand>
        <name>[2Fe-2S] cluster</name>
        <dbReference type="ChEBI" id="CHEBI:190135"/>
    </ligand>
</feature>
<feature type="binding site" evidence="1">
    <location>
        <position position="202"/>
    </location>
    <ligand>
        <name>[2Fe-2S] cluster</name>
        <dbReference type="ChEBI" id="CHEBI:190135"/>
    </ligand>
</feature>
<feature type="binding site" evidence="1">
    <location>
        <position position="274"/>
    </location>
    <ligand>
        <name>[2Fe-2S] cluster</name>
        <dbReference type="ChEBI" id="CHEBI:190135"/>
    </ligand>
</feature>
<keyword id="KW-0001">2Fe-2S</keyword>
<keyword id="KW-0004">4Fe-4S</keyword>
<keyword id="KW-0093">Biotin biosynthesis</keyword>
<keyword id="KW-0408">Iron</keyword>
<keyword id="KW-0411">Iron-sulfur</keyword>
<keyword id="KW-0479">Metal-binding</keyword>
<keyword id="KW-1185">Reference proteome</keyword>
<keyword id="KW-0949">S-adenosyl-L-methionine</keyword>
<keyword id="KW-0808">Transferase</keyword>
<sequence>MTTATAFEIRTLTPHPTLEYWSVCKIEALFETPFLDLVYRAAQVHRENFNPKAIQLSTLMSIKTGGCPEDCGYCPQSARYHTGVEKQQLLDVEEIVEKAKIAKARGAGRFCMGAAWRGPKPKDIEKVTAIIKAVKELGLETCGTFGLLQDGMAEDLKEAGLDYYNHNLDTAPEHYGNVIGTRQFDDRINTLGKVRKAGLKVCCGGIIGMNETRKERAGLIASLANLDPQPESVPINQLVKVEGTPLADAAELDWTEFVRTIAVARITMPKSYVRLSAGRQGMSEEMQAMCFMAGANSIFYGDKLLVTGNPEEDGDQRLMAKLDLEPETEENRYRAE</sequence>
<protein>
    <recommendedName>
        <fullName evidence="1">Biotin synthase</fullName>
        <ecNumber evidence="1">2.8.1.6</ecNumber>
    </recommendedName>
</protein>
<comment type="function">
    <text evidence="1">Catalyzes the conversion of dethiobiotin (DTB) to biotin by the insertion of a sulfur atom into dethiobiotin via a radical-based mechanism.</text>
</comment>
<comment type="catalytic activity">
    <reaction evidence="1">
        <text>(4R,5S)-dethiobiotin + (sulfur carrier)-SH + 2 reduced [2Fe-2S]-[ferredoxin] + 2 S-adenosyl-L-methionine = (sulfur carrier)-H + biotin + 2 5'-deoxyadenosine + 2 L-methionine + 2 oxidized [2Fe-2S]-[ferredoxin]</text>
        <dbReference type="Rhea" id="RHEA:22060"/>
        <dbReference type="Rhea" id="RHEA-COMP:10000"/>
        <dbReference type="Rhea" id="RHEA-COMP:10001"/>
        <dbReference type="Rhea" id="RHEA-COMP:14737"/>
        <dbReference type="Rhea" id="RHEA-COMP:14739"/>
        <dbReference type="ChEBI" id="CHEBI:17319"/>
        <dbReference type="ChEBI" id="CHEBI:29917"/>
        <dbReference type="ChEBI" id="CHEBI:33737"/>
        <dbReference type="ChEBI" id="CHEBI:33738"/>
        <dbReference type="ChEBI" id="CHEBI:57586"/>
        <dbReference type="ChEBI" id="CHEBI:57844"/>
        <dbReference type="ChEBI" id="CHEBI:59789"/>
        <dbReference type="ChEBI" id="CHEBI:64428"/>
        <dbReference type="ChEBI" id="CHEBI:149473"/>
        <dbReference type="EC" id="2.8.1.6"/>
    </reaction>
</comment>
<comment type="cofactor">
    <cofactor evidence="1">
        <name>[4Fe-4S] cluster</name>
        <dbReference type="ChEBI" id="CHEBI:49883"/>
    </cofactor>
    <text evidence="1">Binds 1 [4Fe-4S] cluster. The cluster is coordinated with 3 cysteines and an exchangeable S-adenosyl-L-methionine.</text>
</comment>
<comment type="cofactor">
    <cofactor evidence="1">
        <name>[2Fe-2S] cluster</name>
        <dbReference type="ChEBI" id="CHEBI:190135"/>
    </cofactor>
    <text evidence="1">Binds 1 [2Fe-2S] cluster. The cluster is coordinated with 3 cysteines and 1 arginine.</text>
</comment>
<comment type="pathway">
    <text evidence="1">Cofactor biosynthesis; biotin biosynthesis; biotin from 7,8-diaminononanoate: step 2/2.</text>
</comment>
<comment type="subunit">
    <text evidence="1">Homodimer.</text>
</comment>
<comment type="similarity">
    <text evidence="1">Belongs to the radical SAM superfamily. Biotin synthase family.</text>
</comment>
<organism>
    <name type="scientific">Pasteurella multocida (strain Pm70)</name>
    <dbReference type="NCBI Taxonomy" id="272843"/>
    <lineage>
        <taxon>Bacteria</taxon>
        <taxon>Pseudomonadati</taxon>
        <taxon>Pseudomonadota</taxon>
        <taxon>Gammaproteobacteria</taxon>
        <taxon>Pasteurellales</taxon>
        <taxon>Pasteurellaceae</taxon>
        <taxon>Pasteurella</taxon>
    </lineage>
</organism>
<reference key="1">
    <citation type="journal article" date="2001" name="Proc. Natl. Acad. Sci. U.S.A.">
        <title>Complete genomic sequence of Pasteurella multocida Pm70.</title>
        <authorList>
            <person name="May B.J."/>
            <person name="Zhang Q."/>
            <person name="Li L.L."/>
            <person name="Paustian M.L."/>
            <person name="Whittam T.S."/>
            <person name="Kapur V."/>
        </authorList>
    </citation>
    <scope>NUCLEOTIDE SEQUENCE [LARGE SCALE GENOMIC DNA]</scope>
    <source>
        <strain>Pm70</strain>
    </source>
</reference>
<name>BIOB_PASMU</name>